<dbReference type="EC" id="1.1.1.85" evidence="1"/>
<dbReference type="EMBL" id="BX294155">
    <property type="protein sequence ID" value="CAD77673.1"/>
    <property type="status" value="ALT_INIT"/>
    <property type="molecule type" value="Genomic_DNA"/>
</dbReference>
<dbReference type="RefSeq" id="NP_870596.1">
    <property type="nucleotide sequence ID" value="NC_005027.1"/>
</dbReference>
<dbReference type="RefSeq" id="WP_007328413.1">
    <property type="nucleotide sequence ID" value="NC_005027.1"/>
</dbReference>
<dbReference type="SMR" id="Q7UIE1"/>
<dbReference type="FunCoup" id="Q7UIE1">
    <property type="interactions" value="455"/>
</dbReference>
<dbReference type="STRING" id="243090.RB12597"/>
<dbReference type="EnsemblBacteria" id="CAD77673">
    <property type="protein sequence ID" value="CAD77673"/>
    <property type="gene ID" value="RB12597"/>
</dbReference>
<dbReference type="KEGG" id="rba:RB12597"/>
<dbReference type="PATRIC" id="fig|243090.15.peg.6107"/>
<dbReference type="eggNOG" id="COG0473">
    <property type="taxonomic scope" value="Bacteria"/>
</dbReference>
<dbReference type="HOGENOM" id="CLU_031953_0_3_0"/>
<dbReference type="InParanoid" id="Q7UIE1"/>
<dbReference type="OrthoDB" id="9806254at2"/>
<dbReference type="UniPathway" id="UPA00048">
    <property type="reaction ID" value="UER00072"/>
</dbReference>
<dbReference type="Proteomes" id="UP000001025">
    <property type="component" value="Chromosome"/>
</dbReference>
<dbReference type="GO" id="GO:0005829">
    <property type="term" value="C:cytosol"/>
    <property type="evidence" value="ECO:0000318"/>
    <property type="project" value="GO_Central"/>
</dbReference>
<dbReference type="GO" id="GO:0003862">
    <property type="term" value="F:3-isopropylmalate dehydrogenase activity"/>
    <property type="evidence" value="ECO:0000318"/>
    <property type="project" value="GO_Central"/>
</dbReference>
<dbReference type="GO" id="GO:0000287">
    <property type="term" value="F:magnesium ion binding"/>
    <property type="evidence" value="ECO:0007669"/>
    <property type="project" value="InterPro"/>
</dbReference>
<dbReference type="GO" id="GO:0051287">
    <property type="term" value="F:NAD binding"/>
    <property type="evidence" value="ECO:0007669"/>
    <property type="project" value="InterPro"/>
</dbReference>
<dbReference type="GO" id="GO:0009098">
    <property type="term" value="P:L-leucine biosynthetic process"/>
    <property type="evidence" value="ECO:0000318"/>
    <property type="project" value="GO_Central"/>
</dbReference>
<dbReference type="FunFam" id="3.40.718.10:FF:000006">
    <property type="entry name" value="3-isopropylmalate dehydrogenase"/>
    <property type="match status" value="1"/>
</dbReference>
<dbReference type="Gene3D" id="3.40.718.10">
    <property type="entry name" value="Isopropylmalate Dehydrogenase"/>
    <property type="match status" value="1"/>
</dbReference>
<dbReference type="HAMAP" id="MF_01033">
    <property type="entry name" value="LeuB_type1"/>
    <property type="match status" value="1"/>
</dbReference>
<dbReference type="InterPro" id="IPR019818">
    <property type="entry name" value="IsoCit/isopropylmalate_DH_CS"/>
</dbReference>
<dbReference type="InterPro" id="IPR024084">
    <property type="entry name" value="IsoPropMal-DH-like_dom"/>
</dbReference>
<dbReference type="InterPro" id="IPR004429">
    <property type="entry name" value="Isopropylmalate_DH"/>
</dbReference>
<dbReference type="NCBIfam" id="TIGR00169">
    <property type="entry name" value="leuB"/>
    <property type="match status" value="1"/>
</dbReference>
<dbReference type="PANTHER" id="PTHR42979">
    <property type="entry name" value="3-ISOPROPYLMALATE DEHYDROGENASE"/>
    <property type="match status" value="1"/>
</dbReference>
<dbReference type="PANTHER" id="PTHR42979:SF1">
    <property type="entry name" value="3-ISOPROPYLMALATE DEHYDROGENASE"/>
    <property type="match status" value="1"/>
</dbReference>
<dbReference type="Pfam" id="PF00180">
    <property type="entry name" value="Iso_dh"/>
    <property type="match status" value="1"/>
</dbReference>
<dbReference type="SMART" id="SM01329">
    <property type="entry name" value="Iso_dh"/>
    <property type="match status" value="1"/>
</dbReference>
<dbReference type="SUPFAM" id="SSF53659">
    <property type="entry name" value="Isocitrate/Isopropylmalate dehydrogenase-like"/>
    <property type="match status" value="1"/>
</dbReference>
<dbReference type="PROSITE" id="PS00470">
    <property type="entry name" value="IDH_IMDH"/>
    <property type="match status" value="1"/>
</dbReference>
<gene>
    <name evidence="1" type="primary">leuB</name>
    <name type="ordered locus">RB12597</name>
</gene>
<keyword id="KW-0028">Amino-acid biosynthesis</keyword>
<keyword id="KW-0100">Branched-chain amino acid biosynthesis</keyword>
<keyword id="KW-0963">Cytoplasm</keyword>
<keyword id="KW-0432">Leucine biosynthesis</keyword>
<keyword id="KW-0460">Magnesium</keyword>
<keyword id="KW-0464">Manganese</keyword>
<keyword id="KW-0479">Metal-binding</keyword>
<keyword id="KW-0520">NAD</keyword>
<keyword id="KW-0560">Oxidoreductase</keyword>
<keyword id="KW-1185">Reference proteome</keyword>
<feature type="chain" id="PRO_0000083738" description="3-isopropylmalate dehydrogenase">
    <location>
        <begin position="1"/>
        <end position="359"/>
    </location>
</feature>
<feature type="binding site" evidence="1">
    <location>
        <begin position="76"/>
        <end position="89"/>
    </location>
    <ligand>
        <name>NAD(+)</name>
        <dbReference type="ChEBI" id="CHEBI:57540"/>
    </ligand>
</feature>
<feature type="binding site" evidence="1">
    <location>
        <position position="96"/>
    </location>
    <ligand>
        <name>substrate</name>
    </ligand>
</feature>
<feature type="binding site" evidence="1">
    <location>
        <position position="106"/>
    </location>
    <ligand>
        <name>substrate</name>
    </ligand>
</feature>
<feature type="binding site" evidence="1">
    <location>
        <position position="134"/>
    </location>
    <ligand>
        <name>substrate</name>
    </ligand>
</feature>
<feature type="binding site" evidence="1">
    <location>
        <position position="223"/>
    </location>
    <ligand>
        <name>Mg(2+)</name>
        <dbReference type="ChEBI" id="CHEBI:18420"/>
    </ligand>
</feature>
<feature type="binding site" evidence="1">
    <location>
        <position position="223"/>
    </location>
    <ligand>
        <name>substrate</name>
    </ligand>
</feature>
<feature type="binding site" evidence="1">
    <location>
        <position position="247"/>
    </location>
    <ligand>
        <name>Mg(2+)</name>
        <dbReference type="ChEBI" id="CHEBI:18420"/>
    </ligand>
</feature>
<feature type="binding site" evidence="1">
    <location>
        <position position="251"/>
    </location>
    <ligand>
        <name>Mg(2+)</name>
        <dbReference type="ChEBI" id="CHEBI:18420"/>
    </ligand>
</feature>
<feature type="binding site" evidence="1">
    <location>
        <begin position="281"/>
        <end position="293"/>
    </location>
    <ligand>
        <name>NAD(+)</name>
        <dbReference type="ChEBI" id="CHEBI:57540"/>
    </ligand>
</feature>
<feature type="site" description="Important for catalysis" evidence="1">
    <location>
        <position position="141"/>
    </location>
</feature>
<feature type="site" description="Important for catalysis" evidence="1">
    <location>
        <position position="190"/>
    </location>
</feature>
<protein>
    <recommendedName>
        <fullName evidence="1">3-isopropylmalate dehydrogenase</fullName>
        <ecNumber evidence="1">1.1.1.85</ecNumber>
    </recommendedName>
    <alternativeName>
        <fullName evidence="1">3-IPM-DH</fullName>
    </alternativeName>
    <alternativeName>
        <fullName evidence="1">Beta-IPM dehydrogenase</fullName>
        <shortName evidence="1">IMDH</shortName>
    </alternativeName>
</protein>
<sequence>MNSSIVLLPGDGIGPEIVEQARLVLVKVAERFGHTFDFSSHQIGGIAIDETGDPLPQPTIDACRNAAAILLGAVGGPKWDDPSAKTRPEAGLLKIRKELGLFANLRPIKLFDELADASPLRADIVKGTDILFFRELTGGIYFGESGTSGSGEEETAFQSMTYSVGEVKRIVRMAAQAARGRSNRLTSVDKANVLEPSRLWRRVAAEVMANEFPDVQYDVVLVDSMAMHLINRPSEFDVVVTGNMFGDILTDEASMLPGSLGMLPSASLGDGGPGLYEPIHGSAPDIAGKSVANPLATILAAAMMLRHSLGLTDEAEAIEKAVAGVITDGLRTPDLARGDQSKSVSTEEMGAAVVAKLAS</sequence>
<evidence type="ECO:0000255" key="1">
    <source>
        <dbReference type="HAMAP-Rule" id="MF_01033"/>
    </source>
</evidence>
<evidence type="ECO:0000305" key="2"/>
<reference key="1">
    <citation type="journal article" date="2003" name="Proc. Natl. Acad. Sci. U.S.A.">
        <title>Complete genome sequence of the marine planctomycete Pirellula sp. strain 1.</title>
        <authorList>
            <person name="Gloeckner F.O."/>
            <person name="Kube M."/>
            <person name="Bauer M."/>
            <person name="Teeling H."/>
            <person name="Lombardot T."/>
            <person name="Ludwig W."/>
            <person name="Gade D."/>
            <person name="Beck A."/>
            <person name="Borzym K."/>
            <person name="Heitmann K."/>
            <person name="Rabus R."/>
            <person name="Schlesner H."/>
            <person name="Amann R."/>
            <person name="Reinhardt R."/>
        </authorList>
    </citation>
    <scope>NUCLEOTIDE SEQUENCE [LARGE SCALE GENOMIC DNA]</scope>
    <source>
        <strain>DSM 10527 / NCIMB 13988 / SH1</strain>
    </source>
</reference>
<organism>
    <name type="scientific">Rhodopirellula baltica (strain DSM 10527 / NCIMB 13988 / SH1)</name>
    <dbReference type="NCBI Taxonomy" id="243090"/>
    <lineage>
        <taxon>Bacteria</taxon>
        <taxon>Pseudomonadati</taxon>
        <taxon>Planctomycetota</taxon>
        <taxon>Planctomycetia</taxon>
        <taxon>Pirellulales</taxon>
        <taxon>Pirellulaceae</taxon>
        <taxon>Rhodopirellula</taxon>
    </lineage>
</organism>
<comment type="function">
    <text evidence="1">Catalyzes the oxidation of 3-carboxy-2-hydroxy-4-methylpentanoate (3-isopropylmalate) to 3-carboxy-4-methyl-2-oxopentanoate. The product decarboxylates to 4-methyl-2 oxopentanoate.</text>
</comment>
<comment type="catalytic activity">
    <reaction evidence="1">
        <text>(2R,3S)-3-isopropylmalate + NAD(+) = 4-methyl-2-oxopentanoate + CO2 + NADH</text>
        <dbReference type="Rhea" id="RHEA:32271"/>
        <dbReference type="ChEBI" id="CHEBI:16526"/>
        <dbReference type="ChEBI" id="CHEBI:17865"/>
        <dbReference type="ChEBI" id="CHEBI:35121"/>
        <dbReference type="ChEBI" id="CHEBI:57540"/>
        <dbReference type="ChEBI" id="CHEBI:57945"/>
        <dbReference type="EC" id="1.1.1.85"/>
    </reaction>
</comment>
<comment type="cofactor">
    <cofactor evidence="1">
        <name>Mg(2+)</name>
        <dbReference type="ChEBI" id="CHEBI:18420"/>
    </cofactor>
    <cofactor evidence="1">
        <name>Mn(2+)</name>
        <dbReference type="ChEBI" id="CHEBI:29035"/>
    </cofactor>
    <text evidence="1">Binds 1 Mg(2+) or Mn(2+) ion per subunit.</text>
</comment>
<comment type="pathway">
    <text evidence="1">Amino-acid biosynthesis; L-leucine biosynthesis; L-leucine from 3-methyl-2-oxobutanoate: step 3/4.</text>
</comment>
<comment type="subunit">
    <text evidence="1">Homodimer.</text>
</comment>
<comment type="subcellular location">
    <subcellularLocation>
        <location evidence="1">Cytoplasm</location>
    </subcellularLocation>
</comment>
<comment type="similarity">
    <text evidence="1">Belongs to the isocitrate and isopropylmalate dehydrogenases family. LeuB type 1 subfamily.</text>
</comment>
<comment type="sequence caution" evidence="2">
    <conflict type="erroneous initiation">
        <sequence resource="EMBL-CDS" id="CAD77673"/>
    </conflict>
</comment>
<name>LEU3_RHOBA</name>
<proteinExistence type="inferred from homology"/>
<accession>Q7UIE1</accession>